<proteinExistence type="inferred from homology"/>
<accession>Q754Q7</accession>
<reference key="1">
    <citation type="journal article" date="2004" name="Science">
        <title>The Ashbya gossypii genome as a tool for mapping the ancient Saccharomyces cerevisiae genome.</title>
        <authorList>
            <person name="Dietrich F.S."/>
            <person name="Voegeli S."/>
            <person name="Brachat S."/>
            <person name="Lerch A."/>
            <person name="Gates K."/>
            <person name="Steiner S."/>
            <person name="Mohr C."/>
            <person name="Poehlmann R."/>
            <person name="Luedi P."/>
            <person name="Choi S."/>
            <person name="Wing R.A."/>
            <person name="Flavier A."/>
            <person name="Gaffney T.D."/>
            <person name="Philippsen P."/>
        </authorList>
    </citation>
    <scope>NUCLEOTIDE SEQUENCE [LARGE SCALE GENOMIC DNA]</scope>
    <source>
        <strain>ATCC 10895 / CBS 109.51 / FGSC 9923 / NRRL Y-1056</strain>
    </source>
</reference>
<reference key="2">
    <citation type="journal article" date="2013" name="G3 (Bethesda)">
        <title>Genomes of Ashbya fungi isolated from insects reveal four mating-type loci, numerous translocations, lack of transposons, and distinct gene duplications.</title>
        <authorList>
            <person name="Dietrich F.S."/>
            <person name="Voegeli S."/>
            <person name="Kuo S."/>
            <person name="Philippsen P."/>
        </authorList>
    </citation>
    <scope>GENOME REANNOTATION</scope>
    <source>
        <strain>ATCC 10895 / CBS 109.51 / FGSC 9923 / NRRL Y-1056</strain>
    </source>
</reference>
<feature type="chain" id="PRO_0000212414" description="Man(5)GlcNAc(2)-PP-dolichol translocation protein RFT1">
    <location>
        <begin position="1"/>
        <end position="552"/>
    </location>
</feature>
<feature type="transmembrane region" description="Helical" evidence="2">
    <location>
        <begin position="18"/>
        <end position="38"/>
    </location>
</feature>
<feature type="transmembrane region" description="Helical" evidence="2">
    <location>
        <begin position="42"/>
        <end position="62"/>
    </location>
</feature>
<feature type="transmembrane region" description="Helical" evidence="2">
    <location>
        <begin position="94"/>
        <end position="114"/>
    </location>
</feature>
<feature type="transmembrane region" description="Helical" evidence="2">
    <location>
        <begin position="126"/>
        <end position="146"/>
    </location>
</feature>
<feature type="transmembrane region" description="Helical" evidence="2">
    <location>
        <begin position="168"/>
        <end position="188"/>
    </location>
</feature>
<feature type="transmembrane region" description="Helical" evidence="2">
    <location>
        <begin position="203"/>
        <end position="223"/>
    </location>
</feature>
<feature type="transmembrane region" description="Helical" evidence="2">
    <location>
        <begin position="341"/>
        <end position="361"/>
    </location>
</feature>
<feature type="transmembrane region" description="Helical" evidence="2">
    <location>
        <begin position="389"/>
        <end position="409"/>
    </location>
</feature>
<feature type="transmembrane region" description="Helical" evidence="2">
    <location>
        <begin position="419"/>
        <end position="439"/>
    </location>
</feature>
<feature type="transmembrane region" description="Helical" evidence="2">
    <location>
        <begin position="491"/>
        <end position="511"/>
    </location>
</feature>
<feature type="transmembrane region" description="Helical" evidence="2">
    <location>
        <begin position="512"/>
        <end position="532"/>
    </location>
</feature>
<evidence type="ECO:0000250" key="1">
    <source>
        <dbReference type="UniProtKB" id="P38206"/>
    </source>
</evidence>
<evidence type="ECO:0000255" key="2"/>
<evidence type="ECO:0000305" key="3"/>
<protein>
    <recommendedName>
        <fullName evidence="1">Man(5)GlcNAc(2)-PP-dolichol translocation protein RFT1</fullName>
    </recommendedName>
</protein>
<name>RFT1_EREGS</name>
<dbReference type="EMBL" id="AE016819">
    <property type="protein sequence ID" value="AAS53386.1"/>
    <property type="molecule type" value="Genomic_DNA"/>
</dbReference>
<dbReference type="RefSeq" id="NP_985562.1">
    <property type="nucleotide sequence ID" value="NM_210916.2"/>
</dbReference>
<dbReference type="SMR" id="Q754Q7"/>
<dbReference type="FunCoup" id="Q754Q7">
    <property type="interactions" value="709"/>
</dbReference>
<dbReference type="STRING" id="284811.Q754Q7"/>
<dbReference type="EnsemblFungi" id="AAS53386">
    <property type="protein sequence ID" value="AAS53386"/>
    <property type="gene ID" value="AGOS_AFR015W"/>
</dbReference>
<dbReference type="GeneID" id="4621801"/>
<dbReference type="KEGG" id="ago:AGOS_AFR015W"/>
<dbReference type="eggNOG" id="KOG2864">
    <property type="taxonomic scope" value="Eukaryota"/>
</dbReference>
<dbReference type="HOGENOM" id="CLU_023360_3_0_1"/>
<dbReference type="InParanoid" id="Q754Q7"/>
<dbReference type="OMA" id="WPGKLFG"/>
<dbReference type="OrthoDB" id="9979195at2759"/>
<dbReference type="UniPathway" id="UPA00378"/>
<dbReference type="Proteomes" id="UP000000591">
    <property type="component" value="Chromosome VI"/>
</dbReference>
<dbReference type="GO" id="GO:0005789">
    <property type="term" value="C:endoplasmic reticulum membrane"/>
    <property type="evidence" value="ECO:0000318"/>
    <property type="project" value="GO_Central"/>
</dbReference>
<dbReference type="GO" id="GO:0140327">
    <property type="term" value="F:flippase activity"/>
    <property type="evidence" value="ECO:0007669"/>
    <property type="project" value="EnsemblFungi"/>
</dbReference>
<dbReference type="GO" id="GO:0006488">
    <property type="term" value="P:dolichol-linked oligosaccharide biosynthetic process"/>
    <property type="evidence" value="ECO:0000250"/>
    <property type="project" value="UniProtKB"/>
</dbReference>
<dbReference type="GO" id="GO:0034203">
    <property type="term" value="P:glycolipid translocation"/>
    <property type="evidence" value="ECO:0000250"/>
    <property type="project" value="UniProtKB"/>
</dbReference>
<dbReference type="GO" id="GO:0006487">
    <property type="term" value="P:protein N-linked glycosylation"/>
    <property type="evidence" value="ECO:0000250"/>
    <property type="project" value="UniProtKB"/>
</dbReference>
<dbReference type="InterPro" id="IPR007594">
    <property type="entry name" value="RFT1"/>
</dbReference>
<dbReference type="PANTHER" id="PTHR13117">
    <property type="entry name" value="ENDOPLASMIC RETICULUM MULTISPAN TRANSMEMBRANE PROTEIN-RELATED"/>
    <property type="match status" value="1"/>
</dbReference>
<dbReference type="PANTHER" id="PTHR13117:SF5">
    <property type="entry name" value="PROTEIN RFT1 HOMOLOG"/>
    <property type="match status" value="1"/>
</dbReference>
<dbReference type="Pfam" id="PF04506">
    <property type="entry name" value="Rft-1"/>
    <property type="match status" value="1"/>
</dbReference>
<sequence>MCSTGEEILAKSTQGATFLMMGQLFGKLVTFVLHNVLVRFLSPRIFGITSFLDFLSSTVLFFSREAIRLATLRIKTGGDGGRGGEMSAELQTAVNFANIPMCIGAPLAVVLAVWQYSNLNSYFTQLPFFSWSIYLVLLSILAELASEPLYVVNQFMLNYRKRSQFEGAAVAASCLVNFAVIYWYENWVNGRGETVHDSYKQEGIAVLAFALGKVARAMTLLALYYVDYVRHLAHEKLFSLSLTKVRVPGSVYTAYFDSDVLQHFKKVYFQLCFKHLLTEGDKLIINSLCTVEEQGIYSLLSNYGSLITRMVFAPIEESLLLFLTRLLSDKTQQNLHICMRVLVNLVKFYLYLALVIVIFGPTNSSFLLKFLIGSKWSSTSVLETIRVYCFYLPFLSMNGILEAFFASVASGDEILRHSYLMMLLSGVFLLNCWVFLAHFNLSLEGLIFSNIINMTLRIIYCSNYIRGFYKRLFADSKQTSLSSSFAGLKKILLLCIVVAYVDWSIIGYVQNIRQLLVNILLSVTLVLAMAYNERKLLLEFIKKSKPVPVKEN</sequence>
<comment type="function">
    <text evidence="1">Intramembrane glycolipid transporter that operates in the biosynthetic pathway of dolichol-linked oligosaccharides, the glycan precursors employed in protein asparagine (N)-glycosylation. The sequential addition of sugars to dolichol pyrophosphate produces dolichol-linked oligosaccharides containing fourteen sugars, including two GlcNAcs, nine mannoses and three glucoses. Once assembled, the oligosaccharide is transferred from the lipid to nascent proteins by oligosaccharyltransferases. The assembly of dolichol-linked oligosaccharides begins on the cytosolic side of the endoplasmic reticulum membrane and finishes in its lumen. RFT1 could mediate the translocation of the cytosolically oriented intermediate DolPP-GlcNAc2Man5, produced by ALG11, into the ER lumen where dolichol-linked oligosaccharides assembly continues. However, the intramembrane lipid transporter activity could not be confirmed in vitro.</text>
</comment>
<comment type="pathway">
    <text evidence="1">Protein modification; protein glycosylation.</text>
</comment>
<comment type="subcellular location">
    <subcellularLocation>
        <location evidence="1">Endoplasmic reticulum membrane</location>
        <topology evidence="2">Multi-pass membrane protein</topology>
    </subcellularLocation>
</comment>
<comment type="similarity">
    <text evidence="3">Belongs to the RFT1 family.</text>
</comment>
<keyword id="KW-0256">Endoplasmic reticulum</keyword>
<keyword id="KW-0472">Membrane</keyword>
<keyword id="KW-1185">Reference proteome</keyword>
<keyword id="KW-0762">Sugar transport</keyword>
<keyword id="KW-0812">Transmembrane</keyword>
<keyword id="KW-1133">Transmembrane helix</keyword>
<keyword id="KW-0813">Transport</keyword>
<gene>
    <name type="primary">RFT1</name>
    <name type="ordered locus">AFR015W</name>
</gene>
<organism>
    <name type="scientific">Eremothecium gossypii (strain ATCC 10895 / CBS 109.51 / FGSC 9923 / NRRL Y-1056)</name>
    <name type="common">Yeast</name>
    <name type="synonym">Ashbya gossypii</name>
    <dbReference type="NCBI Taxonomy" id="284811"/>
    <lineage>
        <taxon>Eukaryota</taxon>
        <taxon>Fungi</taxon>
        <taxon>Dikarya</taxon>
        <taxon>Ascomycota</taxon>
        <taxon>Saccharomycotina</taxon>
        <taxon>Saccharomycetes</taxon>
        <taxon>Saccharomycetales</taxon>
        <taxon>Saccharomycetaceae</taxon>
        <taxon>Eremothecium</taxon>
    </lineage>
</organism>